<feature type="chain" id="PRO_0000425274" description="Processive diacylglycerol alpha-glucosyltransferase">
    <location>
        <begin position="1"/>
        <end position="332"/>
    </location>
</feature>
<evidence type="ECO:0000269" key="1">
    <source>
    </source>
</evidence>
<evidence type="ECO:0000269" key="2">
    <source>
    </source>
</evidence>
<evidence type="ECO:0000269" key="3">
    <source>
    </source>
</evidence>
<evidence type="ECO:0000305" key="4"/>
<comment type="function">
    <text evidence="1 2 3">Processive glucosyltransferase involved in the biosynthesis of both the non-bilayer-prone alpha-monoglucosyldiacylglycerol and the bilayer-forming membrane lipid alpha-diglucosyldiacylglycerol. These are major components for maintaining the anionic lipid surface charge density, for balancing the bilayer to non-bilayer phase equilibria and for keeping a constant lipid bilayer spontaneous curvature (curvature packing stress). Catalyzes the transfer of a glucosyl residue from UDP-Glc to diacylglycerol (DAG) acceptor to form the corresponding alpha-glucosyl-DAG (1,2-diacyl-3-O-(alpha-D-glucopyranosyl)-sn-glycerol), which then acts as acceptor to give alpha-diglucosyl-DAG product (3-O-(alpha-D-glucopyranosyl-alpha-(1-&gt;2)-D-glucopyranosyl)-1,2-diacyl-sn-glycerol). It can only use UDP-Glc as sugar donor.</text>
</comment>
<comment type="catalytic activity">
    <reaction evidence="1 2 3">
        <text>a 1,2-diacyl-sn-glycerol + UDP-alpha-D-glucose = a 1,2-diacyl-3-O-(alpha-D-glucopyranosyl)-sn-glycerol + UDP + H(+)</text>
        <dbReference type="Rhea" id="RHEA:47612"/>
        <dbReference type="ChEBI" id="CHEBI:15378"/>
        <dbReference type="ChEBI" id="CHEBI:17670"/>
        <dbReference type="ChEBI" id="CHEBI:17815"/>
        <dbReference type="ChEBI" id="CHEBI:58223"/>
        <dbReference type="ChEBI" id="CHEBI:58885"/>
        <dbReference type="EC" id="2.4.1.337"/>
    </reaction>
</comment>
<comment type="catalytic activity">
    <reaction evidence="1 2 3">
        <text>a 1,2-diacyl-3-O-(alpha-D-glucopyranosyl)-sn-glycerol + UDP-alpha-D-glucose = a 1,2-diacyl-3-O-[alpha-D-glucosyl-(1-&gt; 2)-alpha-D-glucosyl]-sn-glycerol + UDP + H(+)</text>
        <dbReference type="Rhea" id="RHEA:19165"/>
        <dbReference type="ChEBI" id="CHEBI:15378"/>
        <dbReference type="ChEBI" id="CHEBI:17670"/>
        <dbReference type="ChEBI" id="CHEBI:58223"/>
        <dbReference type="ChEBI" id="CHEBI:58885"/>
        <dbReference type="ChEBI" id="CHEBI:76166"/>
        <dbReference type="EC" id="2.4.1.208"/>
    </reaction>
</comment>
<comment type="cofactor">
    <cofactor evidence="1">
        <name>Mg(2+)</name>
        <dbReference type="ChEBI" id="CHEBI:18420"/>
    </cofactor>
</comment>
<comment type="activity regulation">
    <text evidence="1 2 3">Activated by the negatively charged lipids phosphatidylglycerol (PG), cardiolipin (CL), nonbilayer-prone 1,3-DAG, 1,2-dioleoylphosphatidylglycerol (DOPG) and 1,2-dioleoylphosphatidylserine (DOPS). Inhibited by 1,2-diacyl-3-O-(alpha-D-galactopyranosyl)-sn-glycerol, 1,2-diacyl-3-O-[6-O-acyl(alpha-D-glucopyranosyl)]-sn-glycerol and 1,2-diacyl-3-O-[alpha-D-glucopyranosyl-(1-&gt;2)-O-(6-O-acyl-alpha-D-glucopyranosyl)]-sn-glycerol.</text>
</comment>
<comment type="biophysicochemical properties">
    <kinetics>
        <KM evidence="1">0.14 mM for UDP-Glc (alpha-diglucosyldiacylglycerol synthase activity at 28 degrees Celsius)</KM>
        <Vmax evidence="1">19.0 nmol/h/mg enzyme (alpha-diglucosyldiacylglycerol synthase activity at 28 degrees Celsius)</Vmax>
    </kinetics>
</comment>
<comment type="pathway">
    <text>Glycolipid metabolism; diglucosyl-diacylglycerol biosynthesis.</text>
</comment>
<comment type="subcellular location">
    <subcellularLocation>
        <location evidence="2 3">Cell membrane</location>
    </subcellularLocation>
</comment>
<comment type="similarity">
    <text evidence="4">Belongs to the glycosyltransferase group 1 family. Glycosyltransferase 4 subfamily.</text>
</comment>
<dbReference type="EC" id="2.4.1.208" evidence="1 2 3"/>
<dbReference type="EC" id="2.4.1.337" evidence="1 2 3"/>
<dbReference type="EMBL" id="AY078412">
    <property type="protein sequence ID" value="AAL83700.1"/>
    <property type="molecule type" value="Genomic_DNA"/>
</dbReference>
<dbReference type="RefSeq" id="WP_012242482.1">
    <property type="nucleotide sequence ID" value="NZ_VKID01000001.1"/>
</dbReference>
<dbReference type="SMR" id="Q8KQL6"/>
<dbReference type="CAZy" id="GT4">
    <property type="family name" value="Glycosyltransferase Family 4"/>
</dbReference>
<dbReference type="OMA" id="IPVYEGW"/>
<dbReference type="BioCyc" id="MetaCyc:GI40-529-MONOMER"/>
<dbReference type="UniPathway" id="UPA00894"/>
<dbReference type="GO" id="GO:0005886">
    <property type="term" value="C:plasma membrane"/>
    <property type="evidence" value="ECO:0007669"/>
    <property type="project" value="UniProtKB-SubCell"/>
</dbReference>
<dbReference type="GO" id="GO:0047228">
    <property type="term" value="F:1,2-diacylglycerol 3-glucosyltransferase activity"/>
    <property type="evidence" value="ECO:0007669"/>
    <property type="project" value="UniProtKB-EC"/>
</dbReference>
<dbReference type="GO" id="GO:0047257">
    <property type="term" value="F:diglucosyl diacylglycerol synthase activity"/>
    <property type="evidence" value="ECO:0000314"/>
    <property type="project" value="UniProtKB"/>
</dbReference>
<dbReference type="GO" id="GO:0000287">
    <property type="term" value="F:magnesium ion binding"/>
    <property type="evidence" value="ECO:0000314"/>
    <property type="project" value="UniProtKB"/>
</dbReference>
<dbReference type="GO" id="GO:0009246">
    <property type="term" value="P:enterobacterial common antigen biosynthetic process"/>
    <property type="evidence" value="ECO:0007669"/>
    <property type="project" value="UniProtKB-UniPathway"/>
</dbReference>
<dbReference type="GO" id="GO:0006071">
    <property type="term" value="P:glycerol metabolic process"/>
    <property type="evidence" value="ECO:0007669"/>
    <property type="project" value="UniProtKB-KW"/>
</dbReference>
<dbReference type="GO" id="GO:0046467">
    <property type="term" value="P:membrane lipid biosynthetic process"/>
    <property type="evidence" value="ECO:0000314"/>
    <property type="project" value="UniProtKB"/>
</dbReference>
<dbReference type="CDD" id="cd03801">
    <property type="entry name" value="GT4_PimA-like"/>
    <property type="match status" value="1"/>
</dbReference>
<dbReference type="Gene3D" id="3.40.50.2000">
    <property type="entry name" value="Glycogen Phosphorylase B"/>
    <property type="match status" value="2"/>
</dbReference>
<dbReference type="InterPro" id="IPR001296">
    <property type="entry name" value="Glyco_trans_1"/>
</dbReference>
<dbReference type="InterPro" id="IPR028098">
    <property type="entry name" value="Glyco_trans_4-like_N"/>
</dbReference>
<dbReference type="InterPro" id="IPR050194">
    <property type="entry name" value="Glycosyltransferase_grp1"/>
</dbReference>
<dbReference type="PANTHER" id="PTHR45947">
    <property type="entry name" value="SULFOQUINOVOSYL TRANSFERASE SQD2"/>
    <property type="match status" value="1"/>
</dbReference>
<dbReference type="PANTHER" id="PTHR45947:SF3">
    <property type="entry name" value="SULFOQUINOVOSYL TRANSFERASE SQD2"/>
    <property type="match status" value="1"/>
</dbReference>
<dbReference type="Pfam" id="PF13439">
    <property type="entry name" value="Glyco_transf_4"/>
    <property type="match status" value="1"/>
</dbReference>
<dbReference type="Pfam" id="PF00534">
    <property type="entry name" value="Glycos_transf_1"/>
    <property type="match status" value="1"/>
</dbReference>
<dbReference type="SUPFAM" id="SSF53756">
    <property type="entry name" value="UDP-Glycosyltransferase/glycogen phosphorylase"/>
    <property type="match status" value="1"/>
</dbReference>
<sequence length="332" mass="38447">MKVLLYSQKQSMLKKSGIGRAFYHQKRALEAVGIEYTTDPKDTYDLVHVNIAHSNKIKKFRKKYPVIVHGHSTVQDFRRSFAFWRVIAPFFYKHLQNIYGIADLIITPTRYSKFLIESMHVVKSPVVALSNGIDLDAYEYKQENVDAFRKHFDLEPNQKVVIGVGLLFERKGIHDFIEVARTMPNVTFIWFGNLSKLATTHFIRKRIKNKPKNMIMPGYVDGAVIKGAFSGADCVFFPSYEETEGIVVLEGLASKTPVVLRDIPVYYDWLFHKEHVLKGHNNFEFSKLIEKVLHEDQTEMIENGYKIVQDRSIEKIGEGLKQAYQEVIKIKR</sequence>
<protein>
    <recommendedName>
        <fullName>Processive diacylglycerol alpha-glucosyltransferase</fullName>
        <ecNumber evidence="1 2 3">2.4.1.208</ecNumber>
        <ecNumber evidence="1 2 3">2.4.1.337</ecNumber>
    </recommendedName>
    <alternativeName>
        <fullName>Alpha-diglucosyldiacylglycerol synthase</fullName>
        <shortName>Alpha-DGS</shortName>
        <shortName>DGlcDAG synthase</shortName>
    </alternativeName>
    <alternativeName>
        <fullName>Alpha-monoglucosyldiacylglycerol synthase</fullName>
        <shortName>Alpha-MGS</shortName>
        <shortName>MGlcDAG synthase</shortName>
    </alternativeName>
    <alternativeName>
        <fullName>Glucosyl-alpha-1,2-glucosyldiacylglycerol synthase</fullName>
    </alternativeName>
    <alternativeName>
        <fullName>UDP-glucose:1,2-diacylglycerol 3-alpha-D-glucosyltransferase</fullName>
    </alternativeName>
</protein>
<gene>
    <name type="primary">dgs</name>
</gene>
<name>PADGT_ACHLA</name>
<keyword id="KW-0119">Carbohydrate metabolism</keyword>
<keyword id="KW-1003">Cell membrane</keyword>
<keyword id="KW-0903">Direct protein sequencing</keyword>
<keyword id="KW-0319">Glycerol metabolism</keyword>
<keyword id="KW-0328">Glycosyltransferase</keyword>
<keyword id="KW-0444">Lipid biosynthesis</keyword>
<keyword id="KW-0443">Lipid metabolism</keyword>
<keyword id="KW-0460">Magnesium</keyword>
<keyword id="KW-0472">Membrane</keyword>
<keyword id="KW-0808">Transferase</keyword>
<accession>Q8KQL6</accession>
<reference key="1">
    <citation type="journal article" date="2003" name="J. Biol. Chem.">
        <title>Structural features of glycosyltransferases synthesizing major bilayer and nonbilayer-prone membrane lipids in Acholeplasma laidlawii and Streptococcus pneumoniae.</title>
        <authorList>
            <person name="Edman M."/>
            <person name="Berg S."/>
            <person name="Storm P."/>
            <person name="Wikstrom M."/>
            <person name="Vikstrom S."/>
            <person name="Ohman A."/>
            <person name="Wieslander A."/>
        </authorList>
    </citation>
    <scope>NUCLEOTIDE SEQUENCE [GENOMIC DNA]</scope>
    <scope>PROTEIN SEQUENCE OF 1-30</scope>
    <scope>FUNCTION</scope>
    <scope>CATALYTIC ACTIVITY</scope>
    <scope>SUBCELLULAR LOCATION</scope>
    <scope>ACTIVITY REGULATION</scope>
    <source>
        <strain>A-EF22</strain>
    </source>
</reference>
<reference key="2">
    <citation type="journal article" date="1992" name="Biochim. Biophys. Acta">
        <title>The enzymatic synthesis of membrane glucolipids in Acholeplasma laidlawii.</title>
        <authorList>
            <person name="Dahlqvist A."/>
            <person name="Andersson S."/>
            <person name="Wieslander A."/>
        </authorList>
    </citation>
    <scope>FUNCTION</scope>
    <scope>CATALYTIC ACTIVITY</scope>
    <scope>SUBCELLULAR LOCATION</scope>
    <scope>ACTIVITY REGULATION</scope>
    <source>
        <strain>A-EF22</strain>
    </source>
</reference>
<reference key="3">
    <citation type="journal article" date="1999" name="Biochemistry">
        <title>Key role of the diglucosyldiacylglycerol synthase for the nonbilayer-bilayer lipid balance of Acholeplasma laidlawii membranes.</title>
        <authorList>
            <person name="Vikstrom S."/>
            <person name="Li L."/>
            <person name="Karlsson O.P."/>
            <person name="Wieslander A."/>
        </authorList>
    </citation>
    <scope>FUNCTION</scope>
    <scope>CATALYTIC ACTIVITY</scope>
    <scope>ACTIVITY REGULATION</scope>
    <scope>BIOPHYSICOCHEMICAL PROPERTIES</scope>
    <scope>COFACTOR</scope>
    <source>
        <strain>A-EF22</strain>
    </source>
</reference>
<proteinExistence type="evidence at protein level"/>
<organism>
    <name type="scientific">Acholeplasma laidlawii</name>
    <dbReference type="NCBI Taxonomy" id="2148"/>
    <lineage>
        <taxon>Bacteria</taxon>
        <taxon>Bacillati</taxon>
        <taxon>Mycoplasmatota</taxon>
        <taxon>Mollicutes</taxon>
        <taxon>Acholeplasmatales</taxon>
        <taxon>Acholeplasmataceae</taxon>
        <taxon>Acholeplasma</taxon>
    </lineage>
</organism>